<protein>
    <recommendedName>
        <fullName>Condensin-2 complex subunit H2</fullName>
    </recommendedName>
    <alternativeName>
        <fullName>Kleisin-beta</fullName>
    </alternativeName>
    <alternativeName>
        <fullName>Non-SMC condensin II complex subunit H2</fullName>
    </alternativeName>
</protein>
<name>CNDH2_MOUSE</name>
<sequence length="607" mass="68945">MEDVEVRFAHLLQPIRDLTKNWEVDVAAQLGEYLEELDQICISFDEGKTTMNFIEAALLIQGSACVYSKKVEYLYSLVYQALDFISGKRRAKQLSLVQEDGSKKTVNSETPCETENEFLSLDDFPDSRANVDLKNDQASSELLIIPLLPMALVAPDEVEKNSSPLYSCQGDILASRKDFRMNTCMPNPRGCFMLDPVGMCPVEPVVPVEPYPMSRSQKDPEDAEEQPMEVSRNGSPVPVPDISQEPDGPALSGGEEDAEDGAEPLEVALEPAEPRTSQQSAILPRRYMLRERQGAPEPASRLQETPDPWQSLDPFDSLESKVFQKGKPYSVPPGVEEAPGQKRKRKGATKLQDFHKWYLDAYAEHPDGRRARRKGPTFADMEVLYWKHVKEQLETLQKLRRRKINERWLPGAKQDLWPTEEDRLEESLEDLGVADDFLEPEEYVEEPAGVMPEEAADLDAEAMPESLRYEELVRRNVELFIATSQKFIQETELSQRIRDWEDTIQPLLQEQEQHVPFDIHIYGDQLASRFPQLNEWCPFSELVAGQPAFEVCRSMLASLQLANDYTVEITQQPGLEAAVDTMSLRLLTHQRAHTRFQTYAAPSMAQP</sequence>
<keyword id="KW-0025">Alternative splicing</keyword>
<keyword id="KW-0225">Disease variant</keyword>
<keyword id="KW-0226">DNA condensation</keyword>
<keyword id="KW-0539">Nucleus</keyword>
<keyword id="KW-0597">Phosphoprotein</keyword>
<keyword id="KW-1185">Reference proteome</keyword>
<reference key="1">
    <citation type="journal article" date="2005" name="Science">
        <title>The transcriptional landscape of the mammalian genome.</title>
        <authorList>
            <person name="Carninci P."/>
            <person name="Kasukawa T."/>
            <person name="Katayama S."/>
            <person name="Gough J."/>
            <person name="Frith M.C."/>
            <person name="Maeda N."/>
            <person name="Oyama R."/>
            <person name="Ravasi T."/>
            <person name="Lenhard B."/>
            <person name="Wells C."/>
            <person name="Kodzius R."/>
            <person name="Shimokawa K."/>
            <person name="Bajic V.B."/>
            <person name="Brenner S.E."/>
            <person name="Batalov S."/>
            <person name="Forrest A.R."/>
            <person name="Zavolan M."/>
            <person name="Davis M.J."/>
            <person name="Wilming L.G."/>
            <person name="Aidinis V."/>
            <person name="Allen J.E."/>
            <person name="Ambesi-Impiombato A."/>
            <person name="Apweiler R."/>
            <person name="Aturaliya R.N."/>
            <person name="Bailey T.L."/>
            <person name="Bansal M."/>
            <person name="Baxter L."/>
            <person name="Beisel K.W."/>
            <person name="Bersano T."/>
            <person name="Bono H."/>
            <person name="Chalk A.M."/>
            <person name="Chiu K.P."/>
            <person name="Choudhary V."/>
            <person name="Christoffels A."/>
            <person name="Clutterbuck D.R."/>
            <person name="Crowe M.L."/>
            <person name="Dalla E."/>
            <person name="Dalrymple B.P."/>
            <person name="de Bono B."/>
            <person name="Della Gatta G."/>
            <person name="di Bernardo D."/>
            <person name="Down T."/>
            <person name="Engstrom P."/>
            <person name="Fagiolini M."/>
            <person name="Faulkner G."/>
            <person name="Fletcher C.F."/>
            <person name="Fukushima T."/>
            <person name="Furuno M."/>
            <person name="Futaki S."/>
            <person name="Gariboldi M."/>
            <person name="Georgii-Hemming P."/>
            <person name="Gingeras T.R."/>
            <person name="Gojobori T."/>
            <person name="Green R.E."/>
            <person name="Gustincich S."/>
            <person name="Harbers M."/>
            <person name="Hayashi Y."/>
            <person name="Hensch T.K."/>
            <person name="Hirokawa N."/>
            <person name="Hill D."/>
            <person name="Huminiecki L."/>
            <person name="Iacono M."/>
            <person name="Ikeo K."/>
            <person name="Iwama A."/>
            <person name="Ishikawa T."/>
            <person name="Jakt M."/>
            <person name="Kanapin A."/>
            <person name="Katoh M."/>
            <person name="Kawasawa Y."/>
            <person name="Kelso J."/>
            <person name="Kitamura H."/>
            <person name="Kitano H."/>
            <person name="Kollias G."/>
            <person name="Krishnan S.P."/>
            <person name="Kruger A."/>
            <person name="Kummerfeld S.K."/>
            <person name="Kurochkin I.V."/>
            <person name="Lareau L.F."/>
            <person name="Lazarevic D."/>
            <person name="Lipovich L."/>
            <person name="Liu J."/>
            <person name="Liuni S."/>
            <person name="McWilliam S."/>
            <person name="Madan Babu M."/>
            <person name="Madera M."/>
            <person name="Marchionni L."/>
            <person name="Matsuda H."/>
            <person name="Matsuzawa S."/>
            <person name="Miki H."/>
            <person name="Mignone F."/>
            <person name="Miyake S."/>
            <person name="Morris K."/>
            <person name="Mottagui-Tabar S."/>
            <person name="Mulder N."/>
            <person name="Nakano N."/>
            <person name="Nakauchi H."/>
            <person name="Ng P."/>
            <person name="Nilsson R."/>
            <person name="Nishiguchi S."/>
            <person name="Nishikawa S."/>
            <person name="Nori F."/>
            <person name="Ohara O."/>
            <person name="Okazaki Y."/>
            <person name="Orlando V."/>
            <person name="Pang K.C."/>
            <person name="Pavan W.J."/>
            <person name="Pavesi G."/>
            <person name="Pesole G."/>
            <person name="Petrovsky N."/>
            <person name="Piazza S."/>
            <person name="Reed J."/>
            <person name="Reid J.F."/>
            <person name="Ring B.Z."/>
            <person name="Ringwald M."/>
            <person name="Rost B."/>
            <person name="Ruan Y."/>
            <person name="Salzberg S.L."/>
            <person name="Sandelin A."/>
            <person name="Schneider C."/>
            <person name="Schoenbach C."/>
            <person name="Sekiguchi K."/>
            <person name="Semple C.A."/>
            <person name="Seno S."/>
            <person name="Sessa L."/>
            <person name="Sheng Y."/>
            <person name="Shibata Y."/>
            <person name="Shimada H."/>
            <person name="Shimada K."/>
            <person name="Silva D."/>
            <person name="Sinclair B."/>
            <person name="Sperling S."/>
            <person name="Stupka E."/>
            <person name="Sugiura K."/>
            <person name="Sultana R."/>
            <person name="Takenaka Y."/>
            <person name="Taki K."/>
            <person name="Tammoja K."/>
            <person name="Tan S.L."/>
            <person name="Tang S."/>
            <person name="Taylor M.S."/>
            <person name="Tegner J."/>
            <person name="Teichmann S.A."/>
            <person name="Ueda H.R."/>
            <person name="van Nimwegen E."/>
            <person name="Verardo R."/>
            <person name="Wei C.L."/>
            <person name="Yagi K."/>
            <person name="Yamanishi H."/>
            <person name="Zabarovsky E."/>
            <person name="Zhu S."/>
            <person name="Zimmer A."/>
            <person name="Hide W."/>
            <person name="Bult C."/>
            <person name="Grimmond S.M."/>
            <person name="Teasdale R.D."/>
            <person name="Liu E.T."/>
            <person name="Brusic V."/>
            <person name="Quackenbush J."/>
            <person name="Wahlestedt C."/>
            <person name="Mattick J.S."/>
            <person name="Hume D.A."/>
            <person name="Kai C."/>
            <person name="Sasaki D."/>
            <person name="Tomaru Y."/>
            <person name="Fukuda S."/>
            <person name="Kanamori-Katayama M."/>
            <person name="Suzuki M."/>
            <person name="Aoki J."/>
            <person name="Arakawa T."/>
            <person name="Iida J."/>
            <person name="Imamura K."/>
            <person name="Itoh M."/>
            <person name="Kato T."/>
            <person name="Kawaji H."/>
            <person name="Kawagashira N."/>
            <person name="Kawashima T."/>
            <person name="Kojima M."/>
            <person name="Kondo S."/>
            <person name="Konno H."/>
            <person name="Nakano K."/>
            <person name="Ninomiya N."/>
            <person name="Nishio T."/>
            <person name="Okada M."/>
            <person name="Plessy C."/>
            <person name="Shibata K."/>
            <person name="Shiraki T."/>
            <person name="Suzuki S."/>
            <person name="Tagami M."/>
            <person name="Waki K."/>
            <person name="Watahiki A."/>
            <person name="Okamura-Oho Y."/>
            <person name="Suzuki H."/>
            <person name="Kawai J."/>
            <person name="Hayashizaki Y."/>
        </authorList>
    </citation>
    <scope>NUCLEOTIDE SEQUENCE [LARGE SCALE MRNA] (ISOFORMS 1; 2 AND 3)</scope>
    <source>
        <strain>C57BL/6J</strain>
        <strain>NOD</strain>
        <tissue>Cerebellum</tissue>
        <tissue>Embryo</tissue>
        <tissue>Kidney</tissue>
        <tissue>Skin</tissue>
        <tissue>Spleen</tissue>
        <tissue>Thymus</tissue>
    </source>
</reference>
<reference key="2">
    <citation type="journal article" date="2004" name="Genome Res.">
        <title>The status, quality, and expansion of the NIH full-length cDNA project: the Mammalian Gene Collection (MGC).</title>
        <authorList>
            <consortium name="The MGC Project Team"/>
        </authorList>
    </citation>
    <scope>NUCLEOTIDE SEQUENCE [LARGE SCALE MRNA] (ISOFORM 1)</scope>
    <source>
        <strain>FVB/N</strain>
        <tissue>Mammary tumor</tissue>
    </source>
</reference>
<reference key="3">
    <citation type="journal article" date="2007" name="Proc. Natl. Acad. Sci. U.S.A.">
        <title>A mutation in a chromosome condensin II subunit, kleisin beta, specifically disrupts T cell development.</title>
        <authorList>
            <person name="Gosling K.M."/>
            <person name="Makaroff L.E."/>
            <person name="Theodoratos A."/>
            <person name="Kim Y.-H."/>
            <person name="Whittle B."/>
            <person name="Rui L."/>
            <person name="Wu H."/>
            <person name="Hong N.A."/>
            <person name="Kennedy G.C."/>
            <person name="Fritz J.-A."/>
            <person name="Yates A.L."/>
            <person name="Goodnow C.C."/>
            <person name="Fahrer A.M."/>
        </authorList>
    </citation>
    <scope>ALTERNATIVE SPLICING</scope>
    <scope>VARIANT NESSY ASN-15</scope>
</reference>
<reference key="4">
    <citation type="journal article" date="2007" name="Science">
        <title>ATM and ATR substrate analysis reveals extensive protein networks responsive to DNA damage.</title>
        <authorList>
            <person name="Matsuoka S."/>
            <person name="Ballif B.A."/>
            <person name="Smogorzewska A."/>
            <person name="McDonald E.R. III"/>
            <person name="Hurov K.E."/>
            <person name="Luo J."/>
            <person name="Bakalarski C.E."/>
            <person name="Zhao Z."/>
            <person name="Solimini N."/>
            <person name="Lerenthal Y."/>
            <person name="Shiloh Y."/>
            <person name="Gygi S.P."/>
            <person name="Elledge S.J."/>
        </authorList>
    </citation>
    <scope>PHOSPHORYLATION [LARGE SCALE ANALYSIS] AT SER-494</scope>
    <scope>IDENTIFICATION BY MASS SPECTROMETRY [LARGE SCALE ANALYSIS]</scope>
    <source>
        <tissue>Embryonic fibroblast</tissue>
    </source>
</reference>
<reference key="5">
    <citation type="journal article" date="2010" name="Cell">
        <title>A tissue-specific atlas of mouse protein phosphorylation and expression.</title>
        <authorList>
            <person name="Huttlin E.L."/>
            <person name="Jedrychowski M.P."/>
            <person name="Elias J.E."/>
            <person name="Goswami T."/>
            <person name="Rad R."/>
            <person name="Beausoleil S.A."/>
            <person name="Villen J."/>
            <person name="Haas W."/>
            <person name="Sowa M.E."/>
            <person name="Gygi S.P."/>
        </authorList>
    </citation>
    <scope>PHOSPHORYLATION [LARGE SCALE ANALYSIS] AT SER-235 AND SER-252</scope>
    <scope>IDENTIFICATION BY MASS SPECTROMETRY [LARGE SCALE ANALYSIS]</scope>
    <source>
        <tissue>Lung</tissue>
        <tissue>Spleen</tissue>
    </source>
</reference>
<reference key="6">
    <citation type="journal article" date="2016" name="Genes Dev.">
        <title>Mutations in genes encoding condensin complex proteins cause microcephaly through decatenation failure at mitosis.</title>
        <authorList>
            <consortium name="Deciphering Developmental Disorders Study"/>
            <person name="Martin C.A."/>
            <person name="Murray J.E."/>
            <person name="Carroll P."/>
            <person name="Leitch A."/>
            <person name="Mackenzie K.J."/>
            <person name="Halachev M."/>
            <person name="Fetit A.E."/>
            <person name="Keith C."/>
            <person name="Bicknell L.S."/>
            <person name="Fluteau A."/>
            <person name="Gautier P."/>
            <person name="Hall E.A."/>
            <person name="Joss S."/>
            <person name="Soares G."/>
            <person name="Silva J."/>
            <person name="Bober M.B."/>
            <person name="Duker A."/>
            <person name="Wise C.A."/>
            <person name="Quigley A.J."/>
            <person name="Phadke S.R."/>
            <person name="Wood A.J."/>
            <person name="Vagnarelli P."/>
            <person name="Jackson A.P."/>
        </authorList>
    </citation>
    <scope>FUNCTION</scope>
</reference>
<feature type="chain" id="PRO_0000326242" description="Condensin-2 complex subunit H2">
    <location>
        <begin position="1"/>
        <end position="607"/>
    </location>
</feature>
<feature type="region of interest" description="Disordered" evidence="4">
    <location>
        <begin position="211"/>
        <end position="312"/>
    </location>
</feature>
<feature type="region of interest" description="Disordered" evidence="4">
    <location>
        <begin position="325"/>
        <end position="347"/>
    </location>
</feature>
<feature type="compositionally biased region" description="Acidic residues" evidence="4">
    <location>
        <begin position="254"/>
        <end position="263"/>
    </location>
</feature>
<feature type="modified residue" description="Phosphothreonine" evidence="3">
    <location>
        <position position="19"/>
    </location>
</feature>
<feature type="modified residue" description="Phosphoserine" evidence="3">
    <location>
        <position position="95"/>
    </location>
</feature>
<feature type="modified residue" description="Phosphoserine" evidence="2">
    <location>
        <position position="231"/>
    </location>
</feature>
<feature type="modified residue" description="Phosphoserine" evidence="12">
    <location>
        <position position="235"/>
    </location>
</feature>
<feature type="modified residue" description="Phosphoserine" evidence="12">
    <location>
        <position position="252"/>
    </location>
</feature>
<feature type="modified residue" description="Phosphoserine" evidence="11">
    <location>
        <position position="494"/>
    </location>
</feature>
<feature type="splice variant" id="VSP_032641" description="In isoform 3." evidence="7">
    <original>MEDVEVRFAHLLQPIRDLTKNWEVDVAAQLGEYLEE</original>
    <variation>MWRCALLTSCSPSGISLRTGRWTWRHSW</variation>
    <location>
        <begin position="1"/>
        <end position="36"/>
    </location>
</feature>
<feature type="splice variant" id="VSP_032642" description="In isoform 2." evidence="7">
    <original>A</original>
    <variation>AA</variation>
    <location>
        <position position="434"/>
    </location>
</feature>
<feature type="sequence variant" description="In Nessy." evidence="5">
    <original>I</original>
    <variation>N</variation>
    <location>
        <position position="15"/>
    </location>
</feature>
<feature type="sequence conflict" description="In Ref. 1; BAC39479." evidence="9" ref="1">
    <original>D</original>
    <variation>N</variation>
    <location>
        <position position="83"/>
    </location>
</feature>
<feature type="sequence conflict" description="In Ref. 1; BAC29736." evidence="9" ref="1">
    <original>V</original>
    <variation>M</variation>
    <location>
        <position position="208"/>
    </location>
</feature>
<feature type="sequence conflict" description="In Ref. 1; BAC37919." evidence="9" ref="1">
    <original>K</original>
    <variation>E</variation>
    <location>
        <position position="218"/>
    </location>
</feature>
<dbReference type="EMBL" id="AK004160">
    <property type="protein sequence ID" value="BAB23198.1"/>
    <property type="molecule type" value="mRNA"/>
</dbReference>
<dbReference type="EMBL" id="AK031135">
    <property type="protein sequence ID" value="BAC27270.1"/>
    <property type="molecule type" value="mRNA"/>
</dbReference>
<dbReference type="EMBL" id="AK037175">
    <property type="protein sequence ID" value="BAC29736.1"/>
    <property type="molecule type" value="mRNA"/>
</dbReference>
<dbReference type="EMBL" id="AK080447">
    <property type="protein sequence ID" value="BAC37919.1"/>
    <property type="molecule type" value="mRNA"/>
</dbReference>
<dbReference type="EMBL" id="AK085584">
    <property type="protein sequence ID" value="BAC39479.1"/>
    <property type="molecule type" value="mRNA"/>
</dbReference>
<dbReference type="EMBL" id="AK088294">
    <property type="protein sequence ID" value="BAC40265.1"/>
    <property type="molecule type" value="mRNA"/>
</dbReference>
<dbReference type="EMBL" id="AK146642">
    <property type="protein sequence ID" value="BAE27325.1"/>
    <property type="molecule type" value="mRNA"/>
</dbReference>
<dbReference type="EMBL" id="AK152158">
    <property type="protein sequence ID" value="BAE30993.1"/>
    <property type="molecule type" value="mRNA"/>
</dbReference>
<dbReference type="EMBL" id="AK163958">
    <property type="protein sequence ID" value="BAE37553.1"/>
    <property type="molecule type" value="mRNA"/>
</dbReference>
<dbReference type="EMBL" id="AK165250">
    <property type="protein sequence ID" value="BAE38104.1"/>
    <property type="molecule type" value="mRNA"/>
</dbReference>
<dbReference type="EMBL" id="BC003900">
    <property type="protein sequence ID" value="AAH03900.1"/>
    <property type="status" value="ALT_INIT"/>
    <property type="molecule type" value="mRNA"/>
</dbReference>
<dbReference type="CCDS" id="CCDS49700.1">
    <molecule id="Q8BSP2-1"/>
</dbReference>
<dbReference type="CCDS" id="CCDS70661.1">
    <molecule id="Q8BSP2-2"/>
</dbReference>
<dbReference type="RefSeq" id="NP_001108604.1">
    <molecule id="Q8BSP2-1"/>
    <property type="nucleotide sequence ID" value="NM_001115132.3"/>
</dbReference>
<dbReference type="RefSeq" id="NP_001258530.1">
    <molecule id="Q8BSP2-2"/>
    <property type="nucleotide sequence ID" value="NM_001271601.2"/>
</dbReference>
<dbReference type="BioGRID" id="206732">
    <property type="interactions" value="1"/>
</dbReference>
<dbReference type="ComplexPortal" id="CPX-986">
    <property type="entry name" value="Condensin II complex"/>
</dbReference>
<dbReference type="FunCoup" id="Q8BSP2">
    <property type="interactions" value="2256"/>
</dbReference>
<dbReference type="IntAct" id="Q8BSP2">
    <property type="interactions" value="1"/>
</dbReference>
<dbReference type="STRING" id="10090.ENSMUSP00000086095"/>
<dbReference type="GlyGen" id="Q8BSP2">
    <property type="glycosylation" value="1 site, 1 O-linked glycan (1 site)"/>
</dbReference>
<dbReference type="iPTMnet" id="Q8BSP2"/>
<dbReference type="PhosphoSitePlus" id="Q8BSP2"/>
<dbReference type="PaxDb" id="10090-ENSMUSP00000074139"/>
<dbReference type="PeptideAtlas" id="Q8BSP2"/>
<dbReference type="ProteomicsDB" id="283539">
    <molecule id="Q8BSP2-1"/>
</dbReference>
<dbReference type="ProteomicsDB" id="283540">
    <molecule id="Q8BSP2-2"/>
</dbReference>
<dbReference type="ProteomicsDB" id="283541">
    <molecule id="Q8BSP2-3"/>
</dbReference>
<dbReference type="Pumba" id="Q8BSP2"/>
<dbReference type="Antibodypedia" id="28671">
    <property type="antibodies" value="128 antibodies from 23 providers"/>
</dbReference>
<dbReference type="DNASU" id="52683"/>
<dbReference type="Ensembl" id="ENSMUST00000074552.12">
    <molecule id="Q8BSP2-1"/>
    <property type="protein sequence ID" value="ENSMUSP00000074139.6"/>
    <property type="gene ID" value="ENSMUSG00000008690.16"/>
</dbReference>
<dbReference type="Ensembl" id="ENSMUST00000088717.7">
    <molecule id="Q8BSP2-2"/>
    <property type="protein sequence ID" value="ENSMUSP00000086095.7"/>
    <property type="gene ID" value="ENSMUSG00000008690.16"/>
</dbReference>
<dbReference type="GeneID" id="52683"/>
<dbReference type="KEGG" id="mmu:52683"/>
<dbReference type="UCSC" id="uc007xgg.3">
    <molecule id="Q8BSP2-2"/>
    <property type="organism name" value="mouse"/>
</dbReference>
<dbReference type="UCSC" id="uc007xgh.3">
    <molecule id="Q8BSP2-1"/>
    <property type="organism name" value="mouse"/>
</dbReference>
<dbReference type="UCSC" id="uc007xgk.3">
    <molecule id="Q8BSP2-3"/>
    <property type="organism name" value="mouse"/>
</dbReference>
<dbReference type="AGR" id="MGI:1289164"/>
<dbReference type="CTD" id="29781"/>
<dbReference type="MGI" id="MGI:1289164">
    <property type="gene designation" value="Ncaph2"/>
</dbReference>
<dbReference type="VEuPathDB" id="HostDB:ENSMUSG00000008690"/>
<dbReference type="eggNOG" id="KOG2359">
    <property type="taxonomic scope" value="Eukaryota"/>
</dbReference>
<dbReference type="GeneTree" id="ENSGT00390000014443"/>
<dbReference type="HOGENOM" id="CLU_010569_0_0_1"/>
<dbReference type="InParanoid" id="Q8BSP2"/>
<dbReference type="OMA" id="FDPPEHK"/>
<dbReference type="OrthoDB" id="52840at9989"/>
<dbReference type="TreeFam" id="TF101164"/>
<dbReference type="Reactome" id="R-MMU-2299718">
    <property type="pathway name" value="Condensation of Prophase Chromosomes"/>
</dbReference>
<dbReference type="BioGRID-ORCS" id="52683">
    <property type="hits" value="21 hits in 78 CRISPR screens"/>
</dbReference>
<dbReference type="ChiTaRS" id="Ncaph2">
    <property type="organism name" value="mouse"/>
</dbReference>
<dbReference type="PRO" id="PR:Q8BSP2"/>
<dbReference type="Proteomes" id="UP000000589">
    <property type="component" value="Chromosome 15"/>
</dbReference>
<dbReference type="RNAct" id="Q8BSP2">
    <property type="molecule type" value="protein"/>
</dbReference>
<dbReference type="Bgee" id="ENSMUSG00000008690">
    <property type="expression patterns" value="Expressed in spermatocyte and 221 other cell types or tissues"/>
</dbReference>
<dbReference type="ExpressionAtlas" id="Q8BSP2">
    <property type="expression patterns" value="baseline and differential"/>
</dbReference>
<dbReference type="GO" id="GO:0030054">
    <property type="term" value="C:cell junction"/>
    <property type="evidence" value="ECO:0007669"/>
    <property type="project" value="Ensembl"/>
</dbReference>
<dbReference type="GO" id="GO:0005694">
    <property type="term" value="C:chromosome"/>
    <property type="evidence" value="ECO:0000314"/>
    <property type="project" value="MGI"/>
</dbReference>
<dbReference type="GO" id="GO:0000793">
    <property type="term" value="C:condensed chromosome"/>
    <property type="evidence" value="ECO:0000314"/>
    <property type="project" value="MGI"/>
</dbReference>
<dbReference type="GO" id="GO:0000794">
    <property type="term" value="C:condensed nuclear chromosome"/>
    <property type="evidence" value="ECO:0000314"/>
    <property type="project" value="ComplexPortal"/>
</dbReference>
<dbReference type="GO" id="GO:0000796">
    <property type="term" value="C:condensin complex"/>
    <property type="evidence" value="ECO:0000314"/>
    <property type="project" value="MGI"/>
</dbReference>
<dbReference type="GO" id="GO:0045171">
    <property type="term" value="C:intercellular bridge"/>
    <property type="evidence" value="ECO:0007669"/>
    <property type="project" value="Ensembl"/>
</dbReference>
<dbReference type="GO" id="GO:0005654">
    <property type="term" value="C:nucleoplasm"/>
    <property type="evidence" value="ECO:0007669"/>
    <property type="project" value="Ensembl"/>
</dbReference>
<dbReference type="GO" id="GO:0005634">
    <property type="term" value="C:nucleus"/>
    <property type="evidence" value="ECO:0000314"/>
    <property type="project" value="MGI"/>
</dbReference>
<dbReference type="GO" id="GO:0051309">
    <property type="term" value="P:female meiosis chromosome separation"/>
    <property type="evidence" value="ECO:0000315"/>
    <property type="project" value="MGI"/>
</dbReference>
<dbReference type="GO" id="GO:0007143">
    <property type="term" value="P:female meiotic nuclear division"/>
    <property type="evidence" value="ECO:0000315"/>
    <property type="project" value="MGI"/>
</dbReference>
<dbReference type="GO" id="GO:0010032">
    <property type="term" value="P:meiotic chromosome condensation"/>
    <property type="evidence" value="ECO:0000315"/>
    <property type="project" value="MGI"/>
</dbReference>
<dbReference type="GO" id="GO:0007076">
    <property type="term" value="P:mitotic chromosome condensation"/>
    <property type="evidence" value="ECO:0000315"/>
    <property type="project" value="UniProtKB"/>
</dbReference>
<dbReference type="GO" id="GO:0051306">
    <property type="term" value="P:mitotic sister chromatid separation"/>
    <property type="evidence" value="ECO:0000315"/>
    <property type="project" value="MGI"/>
</dbReference>
<dbReference type="GO" id="GO:1905821">
    <property type="term" value="P:positive regulation of chromosome condensation"/>
    <property type="evidence" value="ECO:0000250"/>
    <property type="project" value="ComplexPortal"/>
</dbReference>
<dbReference type="GO" id="GO:0051984">
    <property type="term" value="P:positive regulation of chromosome segregation"/>
    <property type="evidence" value="ECO:0000315"/>
    <property type="project" value="ComplexPortal"/>
</dbReference>
<dbReference type="GO" id="GO:1905820">
    <property type="term" value="P:positive regulation of chromosome separation"/>
    <property type="evidence" value="ECO:0000315"/>
    <property type="project" value="ComplexPortal"/>
</dbReference>
<dbReference type="GO" id="GO:0033077">
    <property type="term" value="P:T cell differentiation in thymus"/>
    <property type="evidence" value="ECO:0000315"/>
    <property type="project" value="MGI"/>
</dbReference>
<dbReference type="InterPro" id="IPR031737">
    <property type="entry name" value="CNDH2_C"/>
</dbReference>
<dbReference type="InterPro" id="IPR031719">
    <property type="entry name" value="H2_M"/>
</dbReference>
<dbReference type="InterPro" id="IPR009378">
    <property type="entry name" value="H2_N"/>
</dbReference>
<dbReference type="InterPro" id="IPR031739">
    <property type="entry name" value="Ncaph2"/>
</dbReference>
<dbReference type="PANTHER" id="PTHR14324">
    <property type="entry name" value="CONDENSIN-2 COMPLEX SUBUNIT H2"/>
    <property type="match status" value="1"/>
</dbReference>
<dbReference type="PANTHER" id="PTHR14324:SF3">
    <property type="entry name" value="CONDENSIN-2 COMPLEX SUBUNIT H2"/>
    <property type="match status" value="1"/>
</dbReference>
<dbReference type="Pfam" id="PF16858">
    <property type="entry name" value="CNDH2_C"/>
    <property type="match status" value="1"/>
</dbReference>
<dbReference type="Pfam" id="PF16869">
    <property type="entry name" value="CNDH2_M"/>
    <property type="match status" value="1"/>
</dbReference>
<dbReference type="Pfam" id="PF06278">
    <property type="entry name" value="CNDH2_N"/>
    <property type="match status" value="1"/>
</dbReference>
<accession>Q8BSP2</accession>
<accession>Q3TNI4</accession>
<accession>Q8C2N3</accession>
<accession>Q8C3K9</accession>
<accession>Q8C4X8</accession>
<accession>Q8CAZ3</accession>
<accession>Q99L21</accession>
<accession>Q9CT99</accession>
<proteinExistence type="evidence at protein level"/>
<evidence type="ECO:0000250" key="1"/>
<evidence type="ECO:0000250" key="2">
    <source>
        <dbReference type="UniProtKB" id="Q4V8I2"/>
    </source>
</evidence>
<evidence type="ECO:0000250" key="3">
    <source>
        <dbReference type="UniProtKB" id="Q6IBW4"/>
    </source>
</evidence>
<evidence type="ECO:0000256" key="4">
    <source>
        <dbReference type="SAM" id="MobiDB-lite"/>
    </source>
</evidence>
<evidence type="ECO:0000269" key="5">
    <source>
    </source>
</evidence>
<evidence type="ECO:0000269" key="6">
    <source>
    </source>
</evidence>
<evidence type="ECO:0000303" key="7">
    <source>
    </source>
</evidence>
<evidence type="ECO:0000303" key="8">
    <source>
    </source>
</evidence>
<evidence type="ECO:0000305" key="9"/>
<evidence type="ECO:0000312" key="10">
    <source>
        <dbReference type="MGI" id="MGI:1289164"/>
    </source>
</evidence>
<evidence type="ECO:0007744" key="11">
    <source>
    </source>
</evidence>
<evidence type="ECO:0007744" key="12">
    <source>
    </source>
</evidence>
<comment type="function">
    <text evidence="3 6">Regulatory subunit of the condensin-2 complex, a complex that seems to provide chromosomes with an additional level of organization and rigidity and in establishing mitotic chromosome architecture (By similarity). May promote the resolution of double-strand DNA catenanes (intertwines) between sister chromatids. Condensin-mediated compaction likely increases tension in catenated sister chromatids, providing directionality for type II topoisomerase-mediated strand exchanges toward chromatid decatenation. Required for decatenation of chromatin bridges at anaphase. Early in neurogenesis, may play an essential role to ensure accurate mitotic chromosome condensation in neuron stem cells, ultimately affecting neuron pool and cortex size (PubMed:27737959). Seems to have lineage-specific role in T-cell development (By similarity).</text>
</comment>
<comment type="subunit">
    <text evidence="1">Component of the condensin-2 complex, which contains the SMC2 and SMC4 heterodimer, and three non SMC subunits, NCAPG2, NCAPH2 and NCAPD3 that probably regulate the complex.</text>
</comment>
<comment type="subcellular location">
    <subcellularLocation>
        <location evidence="1">Nucleus</location>
    </subcellularLocation>
</comment>
<comment type="alternative products">
    <event type="alternative splicing"/>
    <isoform>
        <id>Q8BSP2-1</id>
        <name>1</name>
        <sequence type="displayed"/>
    </isoform>
    <isoform>
        <id>Q8BSP2-2</id>
        <name>2</name>
        <sequence type="described" ref="VSP_032642"/>
    </isoform>
    <isoform>
        <id>Q8BSP2-3</id>
        <name>3</name>
        <sequence type="described" ref="VSP_032641"/>
    </isoform>
</comment>
<comment type="disease">
    <text>Defects in Ncaph2 are the cause of the nessy phenotype which is characterized by a specific defect in T-cell development. Nessy thymuses are smaller, with corticomedullary junctions less well defined, and cortical cells sparser than in wild-type. The thymocyte defect is typified by an increased proportion of CD4-CD8- DN T-cell progenitors. Only thymocyte differentiation is affected in Nessy mice and not cell differentiation.</text>
</comment>
<comment type="similarity">
    <text evidence="9">Belongs to the CND2 H2 (condensin-2 subunit 2) family.</text>
</comment>
<comment type="sequence caution" evidence="9">
    <conflict type="erroneous initiation">
        <sequence resource="EMBL-CDS" id="AAH03900"/>
    </conflict>
    <text>Truncated N-terminus.</text>
</comment>
<organism>
    <name type="scientific">Mus musculus</name>
    <name type="common">Mouse</name>
    <dbReference type="NCBI Taxonomy" id="10090"/>
    <lineage>
        <taxon>Eukaryota</taxon>
        <taxon>Metazoa</taxon>
        <taxon>Chordata</taxon>
        <taxon>Craniata</taxon>
        <taxon>Vertebrata</taxon>
        <taxon>Euteleostomi</taxon>
        <taxon>Mammalia</taxon>
        <taxon>Eutheria</taxon>
        <taxon>Euarchontoglires</taxon>
        <taxon>Glires</taxon>
        <taxon>Rodentia</taxon>
        <taxon>Myomorpha</taxon>
        <taxon>Muroidea</taxon>
        <taxon>Muridae</taxon>
        <taxon>Murinae</taxon>
        <taxon>Mus</taxon>
        <taxon>Mus</taxon>
    </lineage>
</organism>
<gene>
    <name evidence="8 10" type="primary">Ncaph2</name>
    <name type="synonym">D15Ertd785e</name>
</gene>